<accession>A1AN88</accession>
<gene>
    <name type="ordered locus">Ppro_1186</name>
</gene>
<protein>
    <recommendedName>
        <fullName evidence="1">UPF0102 protein Ppro_1186</fullName>
    </recommendedName>
</protein>
<name>Y1186_PELPD</name>
<comment type="similarity">
    <text evidence="1">Belongs to the UPF0102 family.</text>
</comment>
<organism>
    <name type="scientific">Pelobacter propionicus (strain DSM 2379 / NBRC 103807 / OttBd1)</name>
    <dbReference type="NCBI Taxonomy" id="338966"/>
    <lineage>
        <taxon>Bacteria</taxon>
        <taxon>Pseudomonadati</taxon>
        <taxon>Thermodesulfobacteriota</taxon>
        <taxon>Desulfuromonadia</taxon>
        <taxon>Desulfuromonadales</taxon>
        <taxon>Desulfuromonadaceae</taxon>
        <taxon>Pelobacter</taxon>
    </lineage>
</organism>
<dbReference type="EMBL" id="CP000482">
    <property type="protein sequence ID" value="ABK98808.1"/>
    <property type="molecule type" value="Genomic_DNA"/>
</dbReference>
<dbReference type="RefSeq" id="WP_011735110.1">
    <property type="nucleotide sequence ID" value="NC_008609.1"/>
</dbReference>
<dbReference type="SMR" id="A1AN88"/>
<dbReference type="STRING" id="338966.Ppro_1186"/>
<dbReference type="KEGG" id="ppd:Ppro_1186"/>
<dbReference type="eggNOG" id="COG0792">
    <property type="taxonomic scope" value="Bacteria"/>
</dbReference>
<dbReference type="HOGENOM" id="CLU_115353_2_3_7"/>
<dbReference type="OrthoDB" id="9794876at2"/>
<dbReference type="Proteomes" id="UP000006732">
    <property type="component" value="Chromosome"/>
</dbReference>
<dbReference type="GO" id="GO:0003676">
    <property type="term" value="F:nucleic acid binding"/>
    <property type="evidence" value="ECO:0007669"/>
    <property type="project" value="InterPro"/>
</dbReference>
<dbReference type="CDD" id="cd20736">
    <property type="entry name" value="PoNe_Nuclease"/>
    <property type="match status" value="1"/>
</dbReference>
<dbReference type="Gene3D" id="3.40.1350.10">
    <property type="match status" value="1"/>
</dbReference>
<dbReference type="HAMAP" id="MF_00048">
    <property type="entry name" value="UPF0102"/>
    <property type="match status" value="1"/>
</dbReference>
<dbReference type="InterPro" id="IPR011335">
    <property type="entry name" value="Restrct_endonuc-II-like"/>
</dbReference>
<dbReference type="InterPro" id="IPR011856">
    <property type="entry name" value="tRNA_endonuc-like_dom_sf"/>
</dbReference>
<dbReference type="InterPro" id="IPR003509">
    <property type="entry name" value="UPF0102_YraN-like"/>
</dbReference>
<dbReference type="NCBIfam" id="NF009150">
    <property type="entry name" value="PRK12497.1-3"/>
    <property type="match status" value="1"/>
</dbReference>
<dbReference type="NCBIfam" id="NF009154">
    <property type="entry name" value="PRK12497.3-3"/>
    <property type="match status" value="1"/>
</dbReference>
<dbReference type="NCBIfam" id="NF011268">
    <property type="entry name" value="PRK14675.1"/>
    <property type="match status" value="1"/>
</dbReference>
<dbReference type="NCBIfam" id="TIGR00252">
    <property type="entry name" value="YraN family protein"/>
    <property type="match status" value="1"/>
</dbReference>
<dbReference type="PANTHER" id="PTHR34039">
    <property type="entry name" value="UPF0102 PROTEIN YRAN"/>
    <property type="match status" value="1"/>
</dbReference>
<dbReference type="PANTHER" id="PTHR34039:SF1">
    <property type="entry name" value="UPF0102 PROTEIN YRAN"/>
    <property type="match status" value="1"/>
</dbReference>
<dbReference type="Pfam" id="PF02021">
    <property type="entry name" value="UPF0102"/>
    <property type="match status" value="1"/>
</dbReference>
<dbReference type="SUPFAM" id="SSF52980">
    <property type="entry name" value="Restriction endonuclease-like"/>
    <property type="match status" value="1"/>
</dbReference>
<feature type="chain" id="PRO_0000336219" description="UPF0102 protein Ppro_1186">
    <location>
        <begin position="1"/>
        <end position="140"/>
    </location>
</feature>
<feature type="region of interest" description="Disordered" evidence="2">
    <location>
        <begin position="1"/>
        <end position="27"/>
    </location>
</feature>
<feature type="compositionally biased region" description="Polar residues" evidence="2">
    <location>
        <begin position="10"/>
        <end position="25"/>
    </location>
</feature>
<proteinExistence type="inferred from homology"/>
<evidence type="ECO:0000255" key="1">
    <source>
        <dbReference type="HAMAP-Rule" id="MF_00048"/>
    </source>
</evidence>
<evidence type="ECO:0000256" key="2">
    <source>
        <dbReference type="SAM" id="MobiDB-lite"/>
    </source>
</evidence>
<reference key="1">
    <citation type="submission" date="2006-10" db="EMBL/GenBank/DDBJ databases">
        <title>Complete sequence of chromosome of Pelobacter propionicus DSM 2379.</title>
        <authorList>
            <consortium name="US DOE Joint Genome Institute"/>
            <person name="Copeland A."/>
            <person name="Lucas S."/>
            <person name="Lapidus A."/>
            <person name="Barry K."/>
            <person name="Detter J.C."/>
            <person name="Glavina del Rio T."/>
            <person name="Hammon N."/>
            <person name="Israni S."/>
            <person name="Dalin E."/>
            <person name="Tice H."/>
            <person name="Pitluck S."/>
            <person name="Saunders E."/>
            <person name="Brettin T."/>
            <person name="Bruce D."/>
            <person name="Han C."/>
            <person name="Tapia R."/>
            <person name="Schmutz J."/>
            <person name="Larimer F."/>
            <person name="Land M."/>
            <person name="Hauser L."/>
            <person name="Kyrpides N."/>
            <person name="Kim E."/>
            <person name="Lovley D."/>
            <person name="Richardson P."/>
        </authorList>
    </citation>
    <scope>NUCLEOTIDE SEQUENCE [LARGE SCALE GENOMIC DNA]</scope>
    <source>
        <strain>DSM 2379 / NBRC 103807 / OttBd1</strain>
    </source>
</reference>
<sequence>MKRPGDGRQESPSSTARPDNRNTGSRGEEIATSFLGQQGYRILERNFRCKGGELDIVARAPGERSLVFVEVKTRRDRSYGPPQLAVTPFKQRQISKAALTWLSRNHLHDSQARFDVIAILLEDGGRHSIEHIVNAFELAY</sequence>
<keyword id="KW-1185">Reference proteome</keyword>